<protein>
    <recommendedName>
        <fullName evidence="1">Serine--tRNA ligase</fullName>
        <ecNumber evidence="1">6.1.1.11</ecNumber>
    </recommendedName>
    <alternativeName>
        <fullName evidence="1">Seryl-tRNA synthetase</fullName>
        <shortName evidence="1">SerRS</shortName>
    </alternativeName>
    <alternativeName>
        <fullName evidence="1">Seryl-tRNA(Ser/Sec) synthetase</fullName>
    </alternativeName>
</protein>
<sequence>MIDLRALEKDFDTIATRLQTKGVEEKVLAELKELFEEYKKEKTILQELQTKQNSLSKMFGQYKREGKDINELKNELEINKGKIAAHQEVVRDLEEKLKNIALTIPNPPDPDVPVGENEEDNVVLKTVLEPKGFDFEPKEHWELGEKLGWIDFERGVKLAKSRFSVLKKEAARLERALINFMLDHNKEYGFEEVCVPFMANSATLLGTGQLPKFEEDLFKICDEDLYMIPTAEVPLTNLYRDEIIKDLEDPIKLTAYTPCFRKEAGSGGRDVRGMIRQHQFDKVELVAITRPEESDKVFDEMVKCASSLLAKLGLPHRHVMLCTGDLGFSAAKTIDLEVWLPGQGKYREISSISNTRDFQARRAQIRFKDGKKNRLVHTLNGSSLAVGRTLIAIMENYQQKDGSIAIPKVLESYL</sequence>
<organism>
    <name type="scientific">Nitratiruptor sp. (strain SB155-2)</name>
    <dbReference type="NCBI Taxonomy" id="387092"/>
    <lineage>
        <taxon>Bacteria</taxon>
        <taxon>Pseudomonadati</taxon>
        <taxon>Campylobacterota</taxon>
        <taxon>Epsilonproteobacteria</taxon>
        <taxon>Nautiliales</taxon>
        <taxon>Nitratiruptoraceae</taxon>
        <taxon>Nitratiruptor</taxon>
    </lineage>
</organism>
<gene>
    <name evidence="1" type="primary">serS</name>
    <name type="ordered locus">NIS_1379</name>
</gene>
<proteinExistence type="inferred from homology"/>
<name>SYS_NITSB</name>
<reference key="1">
    <citation type="journal article" date="2007" name="Proc. Natl. Acad. Sci. U.S.A.">
        <title>Deep-sea vent epsilon-proteobacterial genomes provide insights into emergence of pathogens.</title>
        <authorList>
            <person name="Nakagawa S."/>
            <person name="Takaki Y."/>
            <person name="Shimamura S."/>
            <person name="Reysenbach A.-L."/>
            <person name="Takai K."/>
            <person name="Horikoshi K."/>
        </authorList>
    </citation>
    <scope>NUCLEOTIDE SEQUENCE [LARGE SCALE GENOMIC DNA]</scope>
    <source>
        <strain>SB155-2</strain>
    </source>
</reference>
<feature type="chain" id="PRO_1000019751" description="Serine--tRNA ligase">
    <location>
        <begin position="1"/>
        <end position="414"/>
    </location>
</feature>
<feature type="binding site" evidence="1">
    <location>
        <begin position="230"/>
        <end position="232"/>
    </location>
    <ligand>
        <name>L-serine</name>
        <dbReference type="ChEBI" id="CHEBI:33384"/>
    </ligand>
</feature>
<feature type="binding site" evidence="1">
    <location>
        <begin position="261"/>
        <end position="263"/>
    </location>
    <ligand>
        <name>ATP</name>
        <dbReference type="ChEBI" id="CHEBI:30616"/>
    </ligand>
</feature>
<feature type="binding site" evidence="1">
    <location>
        <position position="284"/>
    </location>
    <ligand>
        <name>L-serine</name>
        <dbReference type="ChEBI" id="CHEBI:33384"/>
    </ligand>
</feature>
<feature type="binding site" evidence="1">
    <location>
        <begin position="348"/>
        <end position="351"/>
    </location>
    <ligand>
        <name>ATP</name>
        <dbReference type="ChEBI" id="CHEBI:30616"/>
    </ligand>
</feature>
<feature type="binding site" evidence="1">
    <location>
        <position position="382"/>
    </location>
    <ligand>
        <name>L-serine</name>
        <dbReference type="ChEBI" id="CHEBI:33384"/>
    </ligand>
</feature>
<dbReference type="EC" id="6.1.1.11" evidence="1"/>
<dbReference type="EMBL" id="AP009178">
    <property type="protein sequence ID" value="BAF70487.1"/>
    <property type="molecule type" value="Genomic_DNA"/>
</dbReference>
<dbReference type="RefSeq" id="WP_012082750.1">
    <property type="nucleotide sequence ID" value="NC_009662.1"/>
</dbReference>
<dbReference type="SMR" id="A6Q4S8"/>
<dbReference type="FunCoup" id="A6Q4S8">
    <property type="interactions" value="446"/>
</dbReference>
<dbReference type="STRING" id="387092.NIS_1379"/>
<dbReference type="KEGG" id="nis:NIS_1379"/>
<dbReference type="eggNOG" id="COG0172">
    <property type="taxonomic scope" value="Bacteria"/>
</dbReference>
<dbReference type="HOGENOM" id="CLU_023797_1_1_7"/>
<dbReference type="InParanoid" id="A6Q4S8"/>
<dbReference type="OrthoDB" id="9804647at2"/>
<dbReference type="UniPathway" id="UPA00906">
    <property type="reaction ID" value="UER00895"/>
</dbReference>
<dbReference type="Proteomes" id="UP000001118">
    <property type="component" value="Chromosome"/>
</dbReference>
<dbReference type="GO" id="GO:0005737">
    <property type="term" value="C:cytoplasm"/>
    <property type="evidence" value="ECO:0007669"/>
    <property type="project" value="UniProtKB-SubCell"/>
</dbReference>
<dbReference type="GO" id="GO:0005524">
    <property type="term" value="F:ATP binding"/>
    <property type="evidence" value="ECO:0007669"/>
    <property type="project" value="UniProtKB-UniRule"/>
</dbReference>
<dbReference type="GO" id="GO:0004828">
    <property type="term" value="F:serine-tRNA ligase activity"/>
    <property type="evidence" value="ECO:0007669"/>
    <property type="project" value="UniProtKB-UniRule"/>
</dbReference>
<dbReference type="GO" id="GO:0016260">
    <property type="term" value="P:selenocysteine biosynthetic process"/>
    <property type="evidence" value="ECO:0007669"/>
    <property type="project" value="UniProtKB-UniRule"/>
</dbReference>
<dbReference type="GO" id="GO:0006434">
    <property type="term" value="P:seryl-tRNA aminoacylation"/>
    <property type="evidence" value="ECO:0007669"/>
    <property type="project" value="UniProtKB-UniRule"/>
</dbReference>
<dbReference type="CDD" id="cd00770">
    <property type="entry name" value="SerRS_core"/>
    <property type="match status" value="1"/>
</dbReference>
<dbReference type="Gene3D" id="3.30.930.10">
    <property type="entry name" value="Bira Bifunctional Protein, Domain 2"/>
    <property type="match status" value="1"/>
</dbReference>
<dbReference type="Gene3D" id="1.10.287.40">
    <property type="entry name" value="Serine-tRNA synthetase, tRNA binding domain"/>
    <property type="match status" value="1"/>
</dbReference>
<dbReference type="HAMAP" id="MF_00176">
    <property type="entry name" value="Ser_tRNA_synth_type1"/>
    <property type="match status" value="1"/>
</dbReference>
<dbReference type="InterPro" id="IPR002314">
    <property type="entry name" value="aa-tRNA-synt_IIb"/>
</dbReference>
<dbReference type="InterPro" id="IPR006195">
    <property type="entry name" value="aa-tRNA-synth_II"/>
</dbReference>
<dbReference type="InterPro" id="IPR045864">
    <property type="entry name" value="aa-tRNA-synth_II/BPL/LPL"/>
</dbReference>
<dbReference type="InterPro" id="IPR002317">
    <property type="entry name" value="Ser-tRNA-ligase_type_1"/>
</dbReference>
<dbReference type="InterPro" id="IPR015866">
    <property type="entry name" value="Ser-tRNA-synth_1_N"/>
</dbReference>
<dbReference type="InterPro" id="IPR042103">
    <property type="entry name" value="SerRS_1_N_sf"/>
</dbReference>
<dbReference type="InterPro" id="IPR033729">
    <property type="entry name" value="SerRS_core"/>
</dbReference>
<dbReference type="InterPro" id="IPR010978">
    <property type="entry name" value="tRNA-bd_arm"/>
</dbReference>
<dbReference type="NCBIfam" id="TIGR00414">
    <property type="entry name" value="serS"/>
    <property type="match status" value="1"/>
</dbReference>
<dbReference type="PANTHER" id="PTHR43697:SF1">
    <property type="entry name" value="SERINE--TRNA LIGASE"/>
    <property type="match status" value="1"/>
</dbReference>
<dbReference type="PANTHER" id="PTHR43697">
    <property type="entry name" value="SERYL-TRNA SYNTHETASE"/>
    <property type="match status" value="1"/>
</dbReference>
<dbReference type="Pfam" id="PF02403">
    <property type="entry name" value="Seryl_tRNA_N"/>
    <property type="match status" value="1"/>
</dbReference>
<dbReference type="Pfam" id="PF00587">
    <property type="entry name" value="tRNA-synt_2b"/>
    <property type="match status" value="1"/>
</dbReference>
<dbReference type="PIRSF" id="PIRSF001529">
    <property type="entry name" value="Ser-tRNA-synth_IIa"/>
    <property type="match status" value="1"/>
</dbReference>
<dbReference type="PRINTS" id="PR00981">
    <property type="entry name" value="TRNASYNTHSER"/>
</dbReference>
<dbReference type="SUPFAM" id="SSF55681">
    <property type="entry name" value="Class II aaRS and biotin synthetases"/>
    <property type="match status" value="1"/>
</dbReference>
<dbReference type="SUPFAM" id="SSF46589">
    <property type="entry name" value="tRNA-binding arm"/>
    <property type="match status" value="1"/>
</dbReference>
<dbReference type="PROSITE" id="PS50862">
    <property type="entry name" value="AA_TRNA_LIGASE_II"/>
    <property type="match status" value="1"/>
</dbReference>
<keyword id="KW-0030">Aminoacyl-tRNA synthetase</keyword>
<keyword id="KW-0067">ATP-binding</keyword>
<keyword id="KW-0963">Cytoplasm</keyword>
<keyword id="KW-0436">Ligase</keyword>
<keyword id="KW-0547">Nucleotide-binding</keyword>
<keyword id="KW-0648">Protein biosynthesis</keyword>
<keyword id="KW-1185">Reference proteome</keyword>
<accession>A6Q4S8</accession>
<comment type="function">
    <text evidence="1">Catalyzes the attachment of serine to tRNA(Ser). Is also able to aminoacylate tRNA(Sec) with serine, to form the misacylated tRNA L-seryl-tRNA(Sec), which will be further converted into selenocysteinyl-tRNA(Sec).</text>
</comment>
<comment type="catalytic activity">
    <reaction evidence="1">
        <text>tRNA(Ser) + L-serine + ATP = L-seryl-tRNA(Ser) + AMP + diphosphate + H(+)</text>
        <dbReference type="Rhea" id="RHEA:12292"/>
        <dbReference type="Rhea" id="RHEA-COMP:9669"/>
        <dbReference type="Rhea" id="RHEA-COMP:9703"/>
        <dbReference type="ChEBI" id="CHEBI:15378"/>
        <dbReference type="ChEBI" id="CHEBI:30616"/>
        <dbReference type="ChEBI" id="CHEBI:33019"/>
        <dbReference type="ChEBI" id="CHEBI:33384"/>
        <dbReference type="ChEBI" id="CHEBI:78442"/>
        <dbReference type="ChEBI" id="CHEBI:78533"/>
        <dbReference type="ChEBI" id="CHEBI:456215"/>
        <dbReference type="EC" id="6.1.1.11"/>
    </reaction>
</comment>
<comment type="catalytic activity">
    <reaction evidence="1">
        <text>tRNA(Sec) + L-serine + ATP = L-seryl-tRNA(Sec) + AMP + diphosphate + H(+)</text>
        <dbReference type="Rhea" id="RHEA:42580"/>
        <dbReference type="Rhea" id="RHEA-COMP:9742"/>
        <dbReference type="Rhea" id="RHEA-COMP:10128"/>
        <dbReference type="ChEBI" id="CHEBI:15378"/>
        <dbReference type="ChEBI" id="CHEBI:30616"/>
        <dbReference type="ChEBI" id="CHEBI:33019"/>
        <dbReference type="ChEBI" id="CHEBI:33384"/>
        <dbReference type="ChEBI" id="CHEBI:78442"/>
        <dbReference type="ChEBI" id="CHEBI:78533"/>
        <dbReference type="ChEBI" id="CHEBI:456215"/>
        <dbReference type="EC" id="6.1.1.11"/>
    </reaction>
</comment>
<comment type="pathway">
    <text evidence="1">Aminoacyl-tRNA biosynthesis; selenocysteinyl-tRNA(Sec) biosynthesis; L-seryl-tRNA(Sec) from L-serine and tRNA(Sec): step 1/1.</text>
</comment>
<comment type="subunit">
    <text evidence="1">Homodimer. The tRNA molecule binds across the dimer.</text>
</comment>
<comment type="subcellular location">
    <subcellularLocation>
        <location evidence="1">Cytoplasm</location>
    </subcellularLocation>
</comment>
<comment type="domain">
    <text evidence="1">Consists of two distinct domains, a catalytic core and a N-terminal extension that is involved in tRNA binding.</text>
</comment>
<comment type="similarity">
    <text evidence="1">Belongs to the class-II aminoacyl-tRNA synthetase family. Type-1 seryl-tRNA synthetase subfamily.</text>
</comment>
<evidence type="ECO:0000255" key="1">
    <source>
        <dbReference type="HAMAP-Rule" id="MF_00176"/>
    </source>
</evidence>